<keyword id="KW-0028">Amino-acid biosynthesis</keyword>
<keyword id="KW-0057">Aromatic amino acid biosynthesis</keyword>
<keyword id="KW-0963">Cytoplasm</keyword>
<keyword id="KW-0808">Transferase</keyword>
<accession>A6VGE5</accession>
<proteinExistence type="inferred from homology"/>
<name>AROA_METM7</name>
<protein>
    <recommendedName>
        <fullName evidence="1">3-phosphoshikimate 1-carboxyvinyltransferase</fullName>
        <ecNumber evidence="1">2.5.1.19</ecNumber>
    </recommendedName>
    <alternativeName>
        <fullName evidence="1">5-enolpyruvylshikimate-3-phosphate synthase</fullName>
        <shortName evidence="1">EPSP synthase</shortName>
        <shortName evidence="1">EPSPS</shortName>
    </alternativeName>
</protein>
<evidence type="ECO:0000255" key="1">
    <source>
        <dbReference type="HAMAP-Rule" id="MF_00210"/>
    </source>
</evidence>
<feature type="chain" id="PRO_0000325405" description="3-phosphoshikimate 1-carboxyvinyltransferase">
    <location>
        <begin position="1"/>
        <end position="429"/>
    </location>
</feature>
<feature type="active site" description="Proton acceptor" evidence="1">
    <location>
        <position position="311"/>
    </location>
</feature>
<feature type="binding site" evidence="1">
    <location>
        <position position="20"/>
    </location>
    <ligand>
        <name>3-phosphoshikimate</name>
        <dbReference type="ChEBI" id="CHEBI:145989"/>
    </ligand>
</feature>
<feature type="binding site" evidence="1">
    <location>
        <position position="20"/>
    </location>
    <ligand>
        <name>phosphoenolpyruvate</name>
        <dbReference type="ChEBI" id="CHEBI:58702"/>
    </ligand>
</feature>
<feature type="binding site" evidence="1">
    <location>
        <position position="21"/>
    </location>
    <ligand>
        <name>3-phosphoshikimate</name>
        <dbReference type="ChEBI" id="CHEBI:145989"/>
    </ligand>
</feature>
<feature type="binding site" evidence="1">
    <location>
        <position position="25"/>
    </location>
    <ligand>
        <name>3-phosphoshikimate</name>
        <dbReference type="ChEBI" id="CHEBI:145989"/>
    </ligand>
</feature>
<feature type="binding site" evidence="1">
    <location>
        <position position="89"/>
    </location>
    <ligand>
        <name>phosphoenolpyruvate</name>
        <dbReference type="ChEBI" id="CHEBI:58702"/>
    </ligand>
</feature>
<feature type="binding site" evidence="1">
    <location>
        <position position="118"/>
    </location>
    <ligand>
        <name>phosphoenolpyruvate</name>
        <dbReference type="ChEBI" id="CHEBI:58702"/>
    </ligand>
</feature>
<feature type="binding site" evidence="1">
    <location>
        <position position="164"/>
    </location>
    <ligand>
        <name>3-phosphoshikimate</name>
        <dbReference type="ChEBI" id="CHEBI:145989"/>
    </ligand>
</feature>
<feature type="binding site" evidence="1">
    <location>
        <position position="165"/>
    </location>
    <ligand>
        <name>3-phosphoshikimate</name>
        <dbReference type="ChEBI" id="CHEBI:145989"/>
    </ligand>
</feature>
<feature type="binding site" evidence="1">
    <location>
        <position position="166"/>
    </location>
    <ligand>
        <name>3-phosphoshikimate</name>
        <dbReference type="ChEBI" id="CHEBI:145989"/>
    </ligand>
</feature>
<feature type="binding site" evidence="1">
    <location>
        <position position="166"/>
    </location>
    <ligand>
        <name>phosphoenolpyruvate</name>
        <dbReference type="ChEBI" id="CHEBI:58702"/>
    </ligand>
</feature>
<feature type="binding site" evidence="1">
    <location>
        <position position="192"/>
    </location>
    <ligand>
        <name>3-phosphoshikimate</name>
        <dbReference type="ChEBI" id="CHEBI:145989"/>
    </ligand>
</feature>
<feature type="binding site" evidence="1">
    <location>
        <position position="311"/>
    </location>
    <ligand>
        <name>3-phosphoshikimate</name>
        <dbReference type="ChEBI" id="CHEBI:145989"/>
    </ligand>
</feature>
<feature type="binding site" evidence="1">
    <location>
        <position position="338"/>
    </location>
    <ligand>
        <name>3-phosphoshikimate</name>
        <dbReference type="ChEBI" id="CHEBI:145989"/>
    </ligand>
</feature>
<feature type="binding site" evidence="1">
    <location>
        <position position="342"/>
    </location>
    <ligand>
        <name>phosphoenolpyruvate</name>
        <dbReference type="ChEBI" id="CHEBI:58702"/>
    </ligand>
</feature>
<feature type="binding site" evidence="1">
    <location>
        <position position="384"/>
    </location>
    <ligand>
        <name>phosphoenolpyruvate</name>
        <dbReference type="ChEBI" id="CHEBI:58702"/>
    </ligand>
</feature>
<dbReference type="EC" id="2.5.1.19" evidence="1"/>
<dbReference type="EMBL" id="CP000745">
    <property type="protein sequence ID" value="ABR65521.1"/>
    <property type="molecule type" value="Genomic_DNA"/>
</dbReference>
<dbReference type="SMR" id="A6VGE5"/>
<dbReference type="STRING" id="426368.MmarC7_0452"/>
<dbReference type="KEGG" id="mmz:MmarC7_0452"/>
<dbReference type="eggNOG" id="arCOG04134">
    <property type="taxonomic scope" value="Archaea"/>
</dbReference>
<dbReference type="HOGENOM" id="CLU_024321_0_0_2"/>
<dbReference type="OrthoDB" id="43788at2157"/>
<dbReference type="UniPathway" id="UPA00053"/>
<dbReference type="GO" id="GO:0005737">
    <property type="term" value="C:cytoplasm"/>
    <property type="evidence" value="ECO:0007669"/>
    <property type="project" value="UniProtKB-SubCell"/>
</dbReference>
<dbReference type="GO" id="GO:0003866">
    <property type="term" value="F:3-phosphoshikimate 1-carboxyvinyltransferase activity"/>
    <property type="evidence" value="ECO:0007669"/>
    <property type="project" value="UniProtKB-UniRule"/>
</dbReference>
<dbReference type="GO" id="GO:0008652">
    <property type="term" value="P:amino acid biosynthetic process"/>
    <property type="evidence" value="ECO:0007669"/>
    <property type="project" value="UniProtKB-KW"/>
</dbReference>
<dbReference type="GO" id="GO:0009073">
    <property type="term" value="P:aromatic amino acid family biosynthetic process"/>
    <property type="evidence" value="ECO:0007669"/>
    <property type="project" value="UniProtKB-KW"/>
</dbReference>
<dbReference type="GO" id="GO:0009423">
    <property type="term" value="P:chorismate biosynthetic process"/>
    <property type="evidence" value="ECO:0007669"/>
    <property type="project" value="UniProtKB-UniRule"/>
</dbReference>
<dbReference type="CDD" id="cd01556">
    <property type="entry name" value="EPSP_synthase"/>
    <property type="match status" value="1"/>
</dbReference>
<dbReference type="FunFam" id="3.65.10.10:FF:000012">
    <property type="entry name" value="Pentafunctional AROM polypeptide"/>
    <property type="match status" value="1"/>
</dbReference>
<dbReference type="Gene3D" id="3.65.10.10">
    <property type="entry name" value="Enolpyruvate transferase domain"/>
    <property type="match status" value="2"/>
</dbReference>
<dbReference type="HAMAP" id="MF_00210">
    <property type="entry name" value="EPSP_synth"/>
    <property type="match status" value="1"/>
</dbReference>
<dbReference type="InterPro" id="IPR001986">
    <property type="entry name" value="Enolpyruvate_Tfrase_dom"/>
</dbReference>
<dbReference type="InterPro" id="IPR036968">
    <property type="entry name" value="Enolpyruvate_Tfrase_sf"/>
</dbReference>
<dbReference type="InterPro" id="IPR006264">
    <property type="entry name" value="EPSP_synthase"/>
</dbReference>
<dbReference type="InterPro" id="IPR023193">
    <property type="entry name" value="EPSP_synthase_CS"/>
</dbReference>
<dbReference type="InterPro" id="IPR013792">
    <property type="entry name" value="RNA3'P_cycl/enolpyr_Trfase_a/b"/>
</dbReference>
<dbReference type="NCBIfam" id="TIGR01356">
    <property type="entry name" value="aroA"/>
    <property type="match status" value="1"/>
</dbReference>
<dbReference type="PANTHER" id="PTHR21090">
    <property type="entry name" value="AROM/DEHYDROQUINATE SYNTHASE"/>
    <property type="match status" value="1"/>
</dbReference>
<dbReference type="PANTHER" id="PTHR21090:SF5">
    <property type="entry name" value="PENTAFUNCTIONAL AROM POLYPEPTIDE"/>
    <property type="match status" value="1"/>
</dbReference>
<dbReference type="Pfam" id="PF00275">
    <property type="entry name" value="EPSP_synthase"/>
    <property type="match status" value="1"/>
</dbReference>
<dbReference type="PIRSF" id="PIRSF000505">
    <property type="entry name" value="EPSPS"/>
    <property type="match status" value="1"/>
</dbReference>
<dbReference type="SUPFAM" id="SSF55205">
    <property type="entry name" value="EPT/RTPC-like"/>
    <property type="match status" value="1"/>
</dbReference>
<dbReference type="PROSITE" id="PS00104">
    <property type="entry name" value="EPSP_SYNTHASE_1"/>
    <property type="match status" value="1"/>
</dbReference>
<dbReference type="PROSITE" id="PS00885">
    <property type="entry name" value="EPSP_SYNTHASE_2"/>
    <property type="match status" value="1"/>
</dbReference>
<comment type="function">
    <text evidence="1">Catalyzes the transfer of the enolpyruvyl moiety of phosphoenolpyruvate (PEP) to the 5-hydroxyl of shikimate-3-phosphate (S3P) to produce enolpyruvyl shikimate-3-phosphate and inorganic phosphate.</text>
</comment>
<comment type="catalytic activity">
    <reaction evidence="1">
        <text>3-phosphoshikimate + phosphoenolpyruvate = 5-O-(1-carboxyvinyl)-3-phosphoshikimate + phosphate</text>
        <dbReference type="Rhea" id="RHEA:21256"/>
        <dbReference type="ChEBI" id="CHEBI:43474"/>
        <dbReference type="ChEBI" id="CHEBI:57701"/>
        <dbReference type="ChEBI" id="CHEBI:58702"/>
        <dbReference type="ChEBI" id="CHEBI:145989"/>
        <dbReference type="EC" id="2.5.1.19"/>
    </reaction>
    <physiologicalReaction direction="left-to-right" evidence="1">
        <dbReference type="Rhea" id="RHEA:21257"/>
    </physiologicalReaction>
</comment>
<comment type="pathway">
    <text evidence="1">Metabolic intermediate biosynthesis; chorismate biosynthesis.</text>
</comment>
<comment type="subunit">
    <text evidence="1">Monomer.</text>
</comment>
<comment type="subcellular location">
    <subcellularLocation>
        <location evidence="1">Cytoplasm</location>
    </subcellularLocation>
</comment>
<comment type="similarity">
    <text evidence="1">Belongs to the EPSP synthase family.</text>
</comment>
<reference key="1">
    <citation type="submission" date="2007-06" db="EMBL/GenBank/DDBJ databases">
        <title>Complete sequence of Methanococcus maripaludis C7.</title>
        <authorList>
            <consortium name="US DOE Joint Genome Institute"/>
            <person name="Copeland A."/>
            <person name="Lucas S."/>
            <person name="Lapidus A."/>
            <person name="Barry K."/>
            <person name="Glavina del Rio T."/>
            <person name="Dalin E."/>
            <person name="Tice H."/>
            <person name="Pitluck S."/>
            <person name="Clum A."/>
            <person name="Schmutz J."/>
            <person name="Larimer F."/>
            <person name="Land M."/>
            <person name="Hauser L."/>
            <person name="Kyrpides N."/>
            <person name="Anderson I."/>
            <person name="Sieprawska-Lupa M."/>
            <person name="Whitman W.B."/>
            <person name="Richardson P."/>
        </authorList>
    </citation>
    <scope>NUCLEOTIDE SEQUENCE [LARGE SCALE GENOMIC DNA]</scope>
    <source>
        <strain>C7 / ATCC BAA-1331</strain>
    </source>
</reference>
<organism>
    <name type="scientific">Methanococcus maripaludis (strain C7 / ATCC BAA-1331)</name>
    <dbReference type="NCBI Taxonomy" id="426368"/>
    <lineage>
        <taxon>Archaea</taxon>
        <taxon>Methanobacteriati</taxon>
        <taxon>Methanobacteriota</taxon>
        <taxon>Methanomada group</taxon>
        <taxon>Methanococci</taxon>
        <taxon>Methanococcales</taxon>
        <taxon>Methanococcaceae</taxon>
        <taxon>Methanococcus</taxon>
    </lineage>
</organism>
<sequence length="429" mass="46761">MLVVKKTPKIKGILSAPPSKSYTHRAVICASLANGVSNLKNPLNGADCLSSAHACEMFGAEIDLNDEKWVVRGSEFKTPDNIVDIGNSGTTLRILTGISSQISDGYTVLTGDDSIRKRPMQPLLDALKQLGLNCFSTKNNGTAPIVVKSGKISNNVVEIRGDMSSQFITSLMMTLPFSENDSEIILTTPIKSEPYLNITIDVLDKFGVKIDKIEEKNKVGYKIKGNQKYLPCDYTIEGDYSSASYLVAAGVLLNSDIVIKNVFKDSKQGDREIIEIVKKMGANVEINEDNVQIMGPYKLKGIEIDVTDIPDLVPTIAVLGCFAEGKTVVYNGEHVRLKECDRLAACTTELSKMGAEIEEKKDGLIITGVHKLNGAKLKTYHDHRLVMAFTIAGMMADGETVIEGEDSVKISFPDFVDKMKSIGSNIEVI</sequence>
<gene>
    <name evidence="1" type="primary">aroA</name>
    <name type="ordered locus">MmarC7_0452</name>
</gene>